<evidence type="ECO:0000255" key="1">
    <source>
        <dbReference type="HAMAP-Rule" id="MF_00563"/>
    </source>
</evidence>
<evidence type="ECO:0000305" key="2"/>
<keyword id="KW-0963">Cytoplasm</keyword>
<keyword id="KW-0378">Hydrolase</keyword>
<keyword id="KW-0520">NAD</keyword>
<keyword id="KW-0554">One-carbon metabolism</keyword>
<keyword id="KW-1185">Reference proteome</keyword>
<organism>
    <name type="scientific">Corynebacterium glutamicum (strain ATCC 13032 / DSM 20300 / JCM 1318 / BCRC 11384 / CCUG 27702 / LMG 3730 / NBRC 12168 / NCIMB 10025 / NRRL B-2784 / 534)</name>
    <dbReference type="NCBI Taxonomy" id="196627"/>
    <lineage>
        <taxon>Bacteria</taxon>
        <taxon>Bacillati</taxon>
        <taxon>Actinomycetota</taxon>
        <taxon>Actinomycetes</taxon>
        <taxon>Mycobacteriales</taxon>
        <taxon>Corynebacteriaceae</taxon>
        <taxon>Corynebacterium</taxon>
    </lineage>
</organism>
<dbReference type="EC" id="3.13.2.1" evidence="1"/>
<dbReference type="EMBL" id="BA000036">
    <property type="protein sequence ID" value="BAB98145.1"/>
    <property type="molecule type" value="Genomic_DNA"/>
</dbReference>
<dbReference type="EMBL" id="BX927150">
    <property type="protein sequence ID" value="CAF19456.1"/>
    <property type="status" value="ALT_INIT"/>
    <property type="molecule type" value="Genomic_DNA"/>
</dbReference>
<dbReference type="RefSeq" id="NP_599981.1">
    <property type="nucleotide sequence ID" value="NC_003450.3"/>
</dbReference>
<dbReference type="SMR" id="Q8NSC4"/>
<dbReference type="STRING" id="196627.cg0860"/>
<dbReference type="KEGG" id="cgb:cg0860"/>
<dbReference type="KEGG" id="cgl:Cgl0752"/>
<dbReference type="PATRIC" id="fig|196627.13.peg.736"/>
<dbReference type="eggNOG" id="COG0499">
    <property type="taxonomic scope" value="Bacteria"/>
</dbReference>
<dbReference type="HOGENOM" id="CLU_025194_2_1_11"/>
<dbReference type="OrthoDB" id="9802717at2"/>
<dbReference type="BioCyc" id="CORYNE:G18NG-10314-MONOMER"/>
<dbReference type="UniPathway" id="UPA00314">
    <property type="reaction ID" value="UER00076"/>
</dbReference>
<dbReference type="Proteomes" id="UP000000582">
    <property type="component" value="Chromosome"/>
</dbReference>
<dbReference type="Proteomes" id="UP000001009">
    <property type="component" value="Chromosome"/>
</dbReference>
<dbReference type="GO" id="GO:0005829">
    <property type="term" value="C:cytosol"/>
    <property type="evidence" value="ECO:0007669"/>
    <property type="project" value="TreeGrafter"/>
</dbReference>
<dbReference type="GO" id="GO:0004013">
    <property type="term" value="F:adenosylhomocysteinase activity"/>
    <property type="evidence" value="ECO:0007669"/>
    <property type="project" value="UniProtKB-UniRule"/>
</dbReference>
<dbReference type="GO" id="GO:0071269">
    <property type="term" value="P:L-homocysteine biosynthetic process"/>
    <property type="evidence" value="ECO:0007669"/>
    <property type="project" value="UniProtKB-UniRule"/>
</dbReference>
<dbReference type="GO" id="GO:0006730">
    <property type="term" value="P:one-carbon metabolic process"/>
    <property type="evidence" value="ECO:0007669"/>
    <property type="project" value="UniProtKB-KW"/>
</dbReference>
<dbReference type="GO" id="GO:0033353">
    <property type="term" value="P:S-adenosylmethionine cycle"/>
    <property type="evidence" value="ECO:0007669"/>
    <property type="project" value="TreeGrafter"/>
</dbReference>
<dbReference type="CDD" id="cd00401">
    <property type="entry name" value="SAHH"/>
    <property type="match status" value="1"/>
</dbReference>
<dbReference type="FunFam" id="3.40.50.720:FF:000004">
    <property type="entry name" value="Adenosylhomocysteinase"/>
    <property type="match status" value="1"/>
</dbReference>
<dbReference type="Gene3D" id="3.40.50.1480">
    <property type="entry name" value="Adenosylhomocysteinase-like"/>
    <property type="match status" value="1"/>
</dbReference>
<dbReference type="Gene3D" id="3.40.50.720">
    <property type="entry name" value="NAD(P)-binding Rossmann-like Domain"/>
    <property type="match status" value="1"/>
</dbReference>
<dbReference type="HAMAP" id="MF_00563">
    <property type="entry name" value="AdoHcyase"/>
    <property type="match status" value="1"/>
</dbReference>
<dbReference type="InterPro" id="IPR042172">
    <property type="entry name" value="Adenosylhomocyst_ase-like_sf"/>
</dbReference>
<dbReference type="InterPro" id="IPR000043">
    <property type="entry name" value="Adenosylhomocysteinase-like"/>
</dbReference>
<dbReference type="InterPro" id="IPR015878">
    <property type="entry name" value="Ado_hCys_hydrolase_NAD-bd"/>
</dbReference>
<dbReference type="InterPro" id="IPR036291">
    <property type="entry name" value="NAD(P)-bd_dom_sf"/>
</dbReference>
<dbReference type="InterPro" id="IPR020082">
    <property type="entry name" value="S-Ado-L-homoCys_hydrolase_CS"/>
</dbReference>
<dbReference type="NCBIfam" id="TIGR00936">
    <property type="entry name" value="ahcY"/>
    <property type="match status" value="1"/>
</dbReference>
<dbReference type="NCBIfam" id="NF004005">
    <property type="entry name" value="PRK05476.2-3"/>
    <property type="match status" value="1"/>
</dbReference>
<dbReference type="PANTHER" id="PTHR23420">
    <property type="entry name" value="ADENOSYLHOMOCYSTEINASE"/>
    <property type="match status" value="1"/>
</dbReference>
<dbReference type="PANTHER" id="PTHR23420:SF0">
    <property type="entry name" value="ADENOSYLHOMOCYSTEINASE"/>
    <property type="match status" value="1"/>
</dbReference>
<dbReference type="Pfam" id="PF05221">
    <property type="entry name" value="AdoHcyase"/>
    <property type="match status" value="1"/>
</dbReference>
<dbReference type="Pfam" id="PF00670">
    <property type="entry name" value="AdoHcyase_NAD"/>
    <property type="match status" value="1"/>
</dbReference>
<dbReference type="PIRSF" id="PIRSF001109">
    <property type="entry name" value="Ad_hcy_hydrolase"/>
    <property type="match status" value="1"/>
</dbReference>
<dbReference type="SMART" id="SM00996">
    <property type="entry name" value="AdoHcyase"/>
    <property type="match status" value="1"/>
</dbReference>
<dbReference type="SMART" id="SM00997">
    <property type="entry name" value="AdoHcyase_NAD"/>
    <property type="match status" value="1"/>
</dbReference>
<dbReference type="SUPFAM" id="SSF52283">
    <property type="entry name" value="Formate/glycerate dehydrogenase catalytic domain-like"/>
    <property type="match status" value="1"/>
</dbReference>
<dbReference type="SUPFAM" id="SSF51735">
    <property type="entry name" value="NAD(P)-binding Rossmann-fold domains"/>
    <property type="match status" value="1"/>
</dbReference>
<dbReference type="PROSITE" id="PS00738">
    <property type="entry name" value="ADOHCYASE_1"/>
    <property type="match status" value="1"/>
</dbReference>
<dbReference type="PROSITE" id="PS00739">
    <property type="entry name" value="ADOHCYASE_2"/>
    <property type="match status" value="1"/>
</dbReference>
<protein>
    <recommendedName>
        <fullName evidence="1">Adenosylhomocysteinase</fullName>
        <ecNumber evidence="1">3.13.2.1</ecNumber>
    </recommendedName>
    <alternativeName>
        <fullName evidence="1">S-adenosyl-L-homocysteine hydrolase</fullName>
        <shortName evidence="1">AdoHcyase</shortName>
    </alternativeName>
</protein>
<accession>Q8NSC4</accession>
<gene>
    <name evidence="1" type="primary">ahcY</name>
    <name type="synonym">sahH</name>
    <name type="ordered locus">Cgl0752</name>
    <name type="ordered locus">cg0860</name>
</gene>
<proteinExistence type="inferred from homology"/>
<feature type="chain" id="PRO_0000116960" description="Adenosylhomocysteinase">
    <location>
        <begin position="1"/>
        <end position="474"/>
    </location>
</feature>
<feature type="binding site" evidence="1">
    <location>
        <position position="53"/>
    </location>
    <ligand>
        <name>substrate</name>
    </ligand>
</feature>
<feature type="binding site" evidence="1">
    <location>
        <position position="135"/>
    </location>
    <ligand>
        <name>substrate</name>
    </ligand>
</feature>
<feature type="binding site" evidence="1">
    <location>
        <position position="197"/>
    </location>
    <ligand>
        <name>substrate</name>
    </ligand>
</feature>
<feature type="binding site" evidence="1">
    <location>
        <begin position="198"/>
        <end position="200"/>
    </location>
    <ligand>
        <name>NAD(+)</name>
        <dbReference type="ChEBI" id="CHEBI:57540"/>
    </ligand>
</feature>
<feature type="binding site" evidence="1">
    <location>
        <position position="227"/>
    </location>
    <ligand>
        <name>substrate</name>
    </ligand>
</feature>
<feature type="binding site" evidence="1">
    <location>
        <position position="231"/>
    </location>
    <ligand>
        <name>substrate</name>
    </ligand>
</feature>
<feature type="binding site" evidence="1">
    <location>
        <position position="232"/>
    </location>
    <ligand>
        <name>NAD(+)</name>
        <dbReference type="ChEBI" id="CHEBI:57540"/>
    </ligand>
</feature>
<feature type="binding site" evidence="1">
    <location>
        <begin position="261"/>
        <end position="266"/>
    </location>
    <ligand>
        <name>NAD(+)</name>
        <dbReference type="ChEBI" id="CHEBI:57540"/>
    </ligand>
</feature>
<feature type="binding site" evidence="1">
    <location>
        <position position="284"/>
    </location>
    <ligand>
        <name>NAD(+)</name>
        <dbReference type="ChEBI" id="CHEBI:57540"/>
    </ligand>
</feature>
<feature type="binding site" evidence="1">
    <location>
        <position position="319"/>
    </location>
    <ligand>
        <name>NAD(+)</name>
        <dbReference type="ChEBI" id="CHEBI:57540"/>
    </ligand>
</feature>
<feature type="binding site" evidence="1">
    <location>
        <begin position="340"/>
        <end position="342"/>
    </location>
    <ligand>
        <name>NAD(+)</name>
        <dbReference type="ChEBI" id="CHEBI:57540"/>
    </ligand>
</feature>
<feature type="binding site" evidence="1">
    <location>
        <position position="388"/>
    </location>
    <ligand>
        <name>NAD(+)</name>
        <dbReference type="ChEBI" id="CHEBI:57540"/>
    </ligand>
</feature>
<comment type="function">
    <text evidence="1">May play a key role in the regulation of the intracellular concentration of adenosylhomocysteine.</text>
</comment>
<comment type="catalytic activity">
    <reaction evidence="1">
        <text>S-adenosyl-L-homocysteine + H2O = L-homocysteine + adenosine</text>
        <dbReference type="Rhea" id="RHEA:21708"/>
        <dbReference type="ChEBI" id="CHEBI:15377"/>
        <dbReference type="ChEBI" id="CHEBI:16335"/>
        <dbReference type="ChEBI" id="CHEBI:57856"/>
        <dbReference type="ChEBI" id="CHEBI:58199"/>
        <dbReference type="EC" id="3.13.2.1"/>
    </reaction>
</comment>
<comment type="cofactor">
    <cofactor evidence="1">
        <name>NAD(+)</name>
        <dbReference type="ChEBI" id="CHEBI:57540"/>
    </cofactor>
    <text evidence="1">Binds 1 NAD(+) per subunit.</text>
</comment>
<comment type="pathway">
    <text evidence="1">Amino-acid biosynthesis; L-homocysteine biosynthesis; L-homocysteine from S-adenosyl-L-homocysteine: step 1/1.</text>
</comment>
<comment type="subcellular location">
    <subcellularLocation>
        <location evidence="1">Cytoplasm</location>
    </subcellularLocation>
</comment>
<comment type="similarity">
    <text evidence="1">Belongs to the adenosylhomocysteinase family.</text>
</comment>
<comment type="sequence caution" evidence="2">
    <conflict type="erroneous initiation">
        <sequence resource="EMBL-CDS" id="CAF19456"/>
    </conflict>
</comment>
<sequence length="474" mass="51996">MDFKVADLSLAEAGRHQIRLAEYEMPGLMQLRKEFADEQPLKGARIAGSIHMTVQTAVLIETLTALGAEVRWASCNIFSTQDEAAAAIVVGSGTVEEPAGVPVFAWKGESLEEYWWCINQIFSWGDELPNMILDDGGDATMAVIRGREYEQAGLVPPAEANDSDEYIAFLGMLREVLAAEPGKWGKIAEAVKGVTEETTTGVHRLYHFAEEGVLPFPAMNVNDAVTKSKFDNKYGTRHSLIDGINRATDMLMGGKNVLVCGYGDVGKGCAEAFDGQGARVKVTEADPINALQALMDGYSVVTVDEAIEDADIVITATGNKDIISFEQMLKMKDHALLGNIGHFDNEIDMHSLLHRDDVTRTTIKPQVDEFTFSTGRSIIVLSEGRLLNLGNATGHPSFVMSNSFADQTIAQIELFQNEGQYENEVYRLPKVLDEKVARIHVEALGGQLTELTKEQAEYIGVDVAGPFKPEHYRY</sequence>
<reference key="1">
    <citation type="journal article" date="2003" name="Appl. Microbiol. Biotechnol.">
        <title>The Corynebacterium glutamicum genome: features and impacts on biotechnological processes.</title>
        <authorList>
            <person name="Ikeda M."/>
            <person name="Nakagawa S."/>
        </authorList>
    </citation>
    <scope>NUCLEOTIDE SEQUENCE [LARGE SCALE GENOMIC DNA]</scope>
    <source>
        <strain>ATCC 13032 / DSM 20300 / JCM 1318 / BCRC 11384 / CCUG 27702 / LMG 3730 / NBRC 12168 / NCIMB 10025 / NRRL B-2784 / 534</strain>
    </source>
</reference>
<reference key="2">
    <citation type="journal article" date="2003" name="J. Biotechnol.">
        <title>The complete Corynebacterium glutamicum ATCC 13032 genome sequence and its impact on the production of L-aspartate-derived amino acids and vitamins.</title>
        <authorList>
            <person name="Kalinowski J."/>
            <person name="Bathe B."/>
            <person name="Bartels D."/>
            <person name="Bischoff N."/>
            <person name="Bott M."/>
            <person name="Burkovski A."/>
            <person name="Dusch N."/>
            <person name="Eggeling L."/>
            <person name="Eikmanns B.J."/>
            <person name="Gaigalat L."/>
            <person name="Goesmann A."/>
            <person name="Hartmann M."/>
            <person name="Huthmacher K."/>
            <person name="Kraemer R."/>
            <person name="Linke B."/>
            <person name="McHardy A.C."/>
            <person name="Meyer F."/>
            <person name="Moeckel B."/>
            <person name="Pfefferle W."/>
            <person name="Puehler A."/>
            <person name="Rey D.A."/>
            <person name="Rueckert C."/>
            <person name="Rupp O."/>
            <person name="Sahm H."/>
            <person name="Wendisch V.F."/>
            <person name="Wiegraebe I."/>
            <person name="Tauch A."/>
        </authorList>
    </citation>
    <scope>NUCLEOTIDE SEQUENCE [LARGE SCALE GENOMIC DNA]</scope>
    <source>
        <strain>ATCC 13032 / DSM 20300 / JCM 1318 / BCRC 11384 / CCUG 27702 / LMG 3730 / NBRC 12168 / NCIMB 10025 / NRRL B-2784 / 534</strain>
    </source>
</reference>
<name>SAHH_CORGL</name>